<reference key="1">
    <citation type="journal article" date="1990" name="Proc. Natl. Acad. Sci. U.S.A.">
        <title>Retron for the 67-base multicopy single-stranded DNA from Escherichia coli: a potential transposable element encoding both reverse transcriptase and Dam methylase functions.</title>
        <authorList>
            <person name="Hsu M.-Y."/>
            <person name="Inouye M."/>
            <person name="Inouye S."/>
        </authorList>
    </citation>
    <scope>NUCLEOTIDE SEQUENCE [GENOMIC DNA]</scope>
    <source>
        <strain>O1:NM / CL-1</strain>
    </source>
</reference>
<accession>P21316</accession>
<organism>
    <name type="scientific">Escherichia coli</name>
    <dbReference type="NCBI Taxonomy" id="562"/>
    <lineage>
        <taxon>Bacteria</taxon>
        <taxon>Pseudomonadati</taxon>
        <taxon>Pseudomonadota</taxon>
        <taxon>Gammaproteobacteria</taxon>
        <taxon>Enterobacterales</taxon>
        <taxon>Enterobacteriaceae</taxon>
        <taxon>Escherichia</taxon>
    </lineage>
</organism>
<evidence type="ECO:0000303" key="1">
    <source>
    </source>
</evidence>
<protein>
    <recommendedName>
        <fullName evidence="1">Protein ORFb in retron Ec67</fullName>
    </recommendedName>
</protein>
<dbReference type="EMBL" id="M55249">
    <property type="protein sequence ID" value="AAA23393.1"/>
    <property type="molecule type" value="Genomic_DNA"/>
</dbReference>
<dbReference type="PIR" id="JQ0857">
    <property type="entry name" value="JQ0857"/>
</dbReference>
<dbReference type="RefSeq" id="WP_000460897.1">
    <property type="nucleotide sequence ID" value="NZ_WXYX01000001.1"/>
</dbReference>
<dbReference type="SMR" id="P21316"/>
<dbReference type="eggNOG" id="ENOG5030H36">
    <property type="taxonomic scope" value="Bacteria"/>
</dbReference>
<dbReference type="GO" id="GO:0003677">
    <property type="term" value="F:DNA binding"/>
    <property type="evidence" value="ECO:0007669"/>
    <property type="project" value="InterPro"/>
</dbReference>
<dbReference type="InterPro" id="IPR009679">
    <property type="entry name" value="Phage_186_CII-like"/>
</dbReference>
<dbReference type="Pfam" id="PF06892">
    <property type="entry name" value="Phage_CP76"/>
    <property type="match status" value="1"/>
</dbReference>
<keyword id="KW-0814">Transposable element</keyword>
<proteinExistence type="predicted"/>
<feature type="chain" id="PRO_0000066454" description="Protein ORFb in retron Ec67">
    <location>
        <begin position="1"/>
        <end position="169"/>
    </location>
</feature>
<name>YR7B_ECOLX</name>
<sequence>MFDYQVSKHPHFDEACRAFALRHNLVQLAERAGMNVQILRNKLNPSQPHLLTAPEIWLLTDLTEDSTLVDGFLAQIHCLPCVPINEVAKEKLPHYVMSATAEIGRVAAGAVSGDVKTSAGRRDAISSINSVTRLMALAAVSLQARLQANPAMASAVDTVTGLGASFGLL</sequence>